<dbReference type="EMBL" id="AF011450">
    <property type="protein sequence ID" value="AAC53387.1"/>
    <property type="molecule type" value="mRNA"/>
</dbReference>
<dbReference type="EMBL" id="AF261131">
    <property type="protein sequence ID" value="AAG27545.1"/>
    <property type="molecule type" value="Genomic_DNA"/>
</dbReference>
<dbReference type="EMBL" id="AF261109">
    <property type="protein sequence ID" value="AAG27545.1"/>
    <property type="status" value="JOINED"/>
    <property type="molecule type" value="Genomic_DNA"/>
</dbReference>
<dbReference type="EMBL" id="AF261110">
    <property type="protein sequence ID" value="AAG27545.1"/>
    <property type="status" value="JOINED"/>
    <property type="molecule type" value="Genomic_DNA"/>
</dbReference>
<dbReference type="EMBL" id="AF261111">
    <property type="protein sequence ID" value="AAG27545.1"/>
    <property type="status" value="JOINED"/>
    <property type="molecule type" value="Genomic_DNA"/>
</dbReference>
<dbReference type="EMBL" id="AF261112">
    <property type="protein sequence ID" value="AAG27545.1"/>
    <property type="status" value="JOINED"/>
    <property type="molecule type" value="Genomic_DNA"/>
</dbReference>
<dbReference type="EMBL" id="AF261113">
    <property type="protein sequence ID" value="AAG27545.1"/>
    <property type="status" value="JOINED"/>
    <property type="molecule type" value="Genomic_DNA"/>
</dbReference>
<dbReference type="EMBL" id="AF261114">
    <property type="protein sequence ID" value="AAG27545.1"/>
    <property type="status" value="JOINED"/>
    <property type="molecule type" value="Genomic_DNA"/>
</dbReference>
<dbReference type="EMBL" id="AF261115">
    <property type="protein sequence ID" value="AAG27545.1"/>
    <property type="status" value="JOINED"/>
    <property type="molecule type" value="Genomic_DNA"/>
</dbReference>
<dbReference type="EMBL" id="AF261116">
    <property type="protein sequence ID" value="AAG27545.1"/>
    <property type="status" value="JOINED"/>
    <property type="molecule type" value="Genomic_DNA"/>
</dbReference>
<dbReference type="EMBL" id="AF261117">
    <property type="protein sequence ID" value="AAG27545.1"/>
    <property type="status" value="JOINED"/>
    <property type="molecule type" value="Genomic_DNA"/>
</dbReference>
<dbReference type="EMBL" id="AF261118">
    <property type="protein sequence ID" value="AAG27545.1"/>
    <property type="status" value="JOINED"/>
    <property type="molecule type" value="Genomic_DNA"/>
</dbReference>
<dbReference type="EMBL" id="AF261119">
    <property type="protein sequence ID" value="AAG27545.1"/>
    <property type="status" value="JOINED"/>
    <property type="molecule type" value="Genomic_DNA"/>
</dbReference>
<dbReference type="EMBL" id="AF261120">
    <property type="protein sequence ID" value="AAG27545.1"/>
    <property type="status" value="JOINED"/>
    <property type="molecule type" value="Genomic_DNA"/>
</dbReference>
<dbReference type="EMBL" id="AF261121">
    <property type="protein sequence ID" value="AAG27545.1"/>
    <property type="status" value="JOINED"/>
    <property type="molecule type" value="Genomic_DNA"/>
</dbReference>
<dbReference type="EMBL" id="AF261122">
    <property type="protein sequence ID" value="AAG27545.1"/>
    <property type="status" value="JOINED"/>
    <property type="molecule type" value="Genomic_DNA"/>
</dbReference>
<dbReference type="EMBL" id="AF261123">
    <property type="protein sequence ID" value="AAG27545.1"/>
    <property type="status" value="JOINED"/>
    <property type="molecule type" value="Genomic_DNA"/>
</dbReference>
<dbReference type="EMBL" id="AF261124">
    <property type="protein sequence ID" value="AAG27545.1"/>
    <property type="status" value="JOINED"/>
    <property type="molecule type" value="Genomic_DNA"/>
</dbReference>
<dbReference type="EMBL" id="AF261125">
    <property type="protein sequence ID" value="AAG27545.1"/>
    <property type="status" value="JOINED"/>
    <property type="molecule type" value="Genomic_DNA"/>
</dbReference>
<dbReference type="EMBL" id="AF261126">
    <property type="protein sequence ID" value="AAG27545.1"/>
    <property type="status" value="JOINED"/>
    <property type="molecule type" value="Genomic_DNA"/>
</dbReference>
<dbReference type="EMBL" id="AF261127">
    <property type="protein sequence ID" value="AAG27545.1"/>
    <property type="status" value="JOINED"/>
    <property type="molecule type" value="Genomic_DNA"/>
</dbReference>
<dbReference type="EMBL" id="AF261128">
    <property type="protein sequence ID" value="AAG27545.1"/>
    <property type="status" value="JOINED"/>
    <property type="molecule type" value="Genomic_DNA"/>
</dbReference>
<dbReference type="EMBL" id="AF261129">
    <property type="protein sequence ID" value="AAG27545.1"/>
    <property type="status" value="JOINED"/>
    <property type="molecule type" value="Genomic_DNA"/>
</dbReference>
<dbReference type="EMBL" id="AF261130">
    <property type="protein sequence ID" value="AAG27545.1"/>
    <property type="status" value="JOINED"/>
    <property type="molecule type" value="Genomic_DNA"/>
</dbReference>
<dbReference type="EMBL" id="AK134030">
    <property type="protein sequence ID" value="BAE21987.1"/>
    <property type="molecule type" value="mRNA"/>
</dbReference>
<dbReference type="EMBL" id="AL772232">
    <property type="status" value="NOT_ANNOTATED_CDS"/>
    <property type="molecule type" value="Genomic_DNA"/>
</dbReference>
<dbReference type="EMBL" id="AL928652">
    <property type="status" value="NOT_ANNOTATED_CDS"/>
    <property type="molecule type" value="Genomic_DNA"/>
</dbReference>
<dbReference type="CCDS" id="CCDS18159.1"/>
<dbReference type="RefSeq" id="NP_034058.2">
    <property type="nucleotide sequence ID" value="NM_009928.3"/>
</dbReference>
<dbReference type="PDB" id="1DY2">
    <property type="method" value="X-ray"/>
    <property type="resolution" value="2.00 A"/>
    <property type="chains" value="A=1192-1367"/>
</dbReference>
<dbReference type="PDBsum" id="1DY2"/>
<dbReference type="SMR" id="O35206"/>
<dbReference type="BioGRID" id="198810">
    <property type="interactions" value="1"/>
</dbReference>
<dbReference type="ComplexPortal" id="CPX-2993">
    <property type="entry name" value="Collagen type XV trimer"/>
</dbReference>
<dbReference type="FunCoup" id="O35206">
    <property type="interactions" value="279"/>
</dbReference>
<dbReference type="IntAct" id="O35206">
    <property type="interactions" value="1"/>
</dbReference>
<dbReference type="STRING" id="10090.ENSMUSP00000099981"/>
<dbReference type="GlyCosmos" id="O35206">
    <property type="glycosylation" value="9 sites, No reported glycans"/>
</dbReference>
<dbReference type="GlyGen" id="O35206">
    <property type="glycosylation" value="15 sites, 1 N-linked glycan (1 site)"/>
</dbReference>
<dbReference type="PhosphoSitePlus" id="O35206"/>
<dbReference type="jPOST" id="O35206"/>
<dbReference type="PaxDb" id="10090-ENSMUSP00000099981"/>
<dbReference type="ProteomicsDB" id="283486"/>
<dbReference type="Antibodypedia" id="14522">
    <property type="antibodies" value="131 antibodies from 20 providers"/>
</dbReference>
<dbReference type="DNASU" id="12819"/>
<dbReference type="Ensembl" id="ENSMUST00000102917.11">
    <property type="protein sequence ID" value="ENSMUSP00000099981.5"/>
    <property type="gene ID" value="ENSMUSG00000028339.18"/>
</dbReference>
<dbReference type="GeneID" id="12819"/>
<dbReference type="KEGG" id="mmu:12819"/>
<dbReference type="UCSC" id="uc008sum.1">
    <property type="organism name" value="mouse"/>
</dbReference>
<dbReference type="AGR" id="MGI:88449"/>
<dbReference type="CTD" id="1306"/>
<dbReference type="MGI" id="MGI:88449">
    <property type="gene designation" value="Col15a1"/>
</dbReference>
<dbReference type="VEuPathDB" id="HostDB:ENSMUSG00000028339"/>
<dbReference type="eggNOG" id="KOG3546">
    <property type="taxonomic scope" value="Eukaryota"/>
</dbReference>
<dbReference type="GeneTree" id="ENSGT00940000158302"/>
<dbReference type="InParanoid" id="O35206"/>
<dbReference type="OMA" id="RATEDQC"/>
<dbReference type="OrthoDB" id="10060752at2759"/>
<dbReference type="PhylomeDB" id="O35206"/>
<dbReference type="TreeFam" id="TF315821"/>
<dbReference type="Reactome" id="R-MMU-1442490">
    <property type="pathway name" value="Collagen degradation"/>
</dbReference>
<dbReference type="Reactome" id="R-MMU-1650814">
    <property type="pathway name" value="Collagen biosynthesis and modifying enzymes"/>
</dbReference>
<dbReference type="Reactome" id="R-MMU-2022090">
    <property type="pathway name" value="Assembly of collagen fibrils and other multimeric structures"/>
</dbReference>
<dbReference type="Reactome" id="R-MMU-8948216">
    <property type="pathway name" value="Collagen chain trimerization"/>
</dbReference>
<dbReference type="BioGRID-ORCS" id="12819">
    <property type="hits" value="0 hits in 78 CRISPR screens"/>
</dbReference>
<dbReference type="ChiTaRS" id="Col15a1">
    <property type="organism name" value="mouse"/>
</dbReference>
<dbReference type="EvolutionaryTrace" id="O35206"/>
<dbReference type="PRO" id="PR:O35206"/>
<dbReference type="Proteomes" id="UP000000589">
    <property type="component" value="Chromosome 4"/>
</dbReference>
<dbReference type="RNAct" id="O35206">
    <property type="molecule type" value="protein"/>
</dbReference>
<dbReference type="Bgee" id="ENSMUSG00000028339">
    <property type="expression patterns" value="Expressed in ascending aorta and 203 other cell types or tissues"/>
</dbReference>
<dbReference type="ExpressionAtlas" id="O35206">
    <property type="expression patterns" value="baseline and differential"/>
</dbReference>
<dbReference type="GO" id="GO:0005604">
    <property type="term" value="C:basement membrane"/>
    <property type="evidence" value="ECO:0000314"/>
    <property type="project" value="MGI"/>
</dbReference>
<dbReference type="GO" id="GO:0005581">
    <property type="term" value="C:collagen trimer"/>
    <property type="evidence" value="ECO:0007669"/>
    <property type="project" value="UniProtKB-KW"/>
</dbReference>
<dbReference type="GO" id="GO:0062023">
    <property type="term" value="C:collagen-containing extracellular matrix"/>
    <property type="evidence" value="ECO:0007005"/>
    <property type="project" value="BHF-UCL"/>
</dbReference>
<dbReference type="GO" id="GO:0005783">
    <property type="term" value="C:endoplasmic reticulum"/>
    <property type="evidence" value="ECO:0007669"/>
    <property type="project" value="Ensembl"/>
</dbReference>
<dbReference type="GO" id="GO:0005615">
    <property type="term" value="C:extracellular space"/>
    <property type="evidence" value="ECO:0007005"/>
    <property type="project" value="BHF-UCL"/>
</dbReference>
<dbReference type="GO" id="GO:0007155">
    <property type="term" value="P:cell adhesion"/>
    <property type="evidence" value="ECO:0007669"/>
    <property type="project" value="UniProtKB-KW"/>
</dbReference>
<dbReference type="CDD" id="cd00247">
    <property type="entry name" value="Endostatin-like"/>
    <property type="match status" value="1"/>
</dbReference>
<dbReference type="FunFam" id="3.40.1620.70:FF:000002">
    <property type="entry name" value="Collagen alpha 1 (XV) chain"/>
    <property type="match status" value="1"/>
</dbReference>
<dbReference type="FunFam" id="3.10.100.10:FF:000008">
    <property type="entry name" value="collagen alpha-1(XVIII) chain isoform X1"/>
    <property type="match status" value="1"/>
</dbReference>
<dbReference type="FunFam" id="2.60.120.200:FF:000039">
    <property type="entry name" value="Collagen XV alpha 1 chain"/>
    <property type="match status" value="1"/>
</dbReference>
<dbReference type="Gene3D" id="2.60.120.200">
    <property type="match status" value="1"/>
</dbReference>
<dbReference type="Gene3D" id="3.40.1620.70">
    <property type="match status" value="1"/>
</dbReference>
<dbReference type="Gene3D" id="3.10.100.10">
    <property type="entry name" value="Mannose-Binding Protein A, subunit A"/>
    <property type="match status" value="1"/>
</dbReference>
<dbReference type="InterPro" id="IPR016186">
    <property type="entry name" value="C-type_lectin-like/link_sf"/>
</dbReference>
<dbReference type="InterPro" id="IPR008160">
    <property type="entry name" value="Collagen"/>
</dbReference>
<dbReference type="InterPro" id="IPR050149">
    <property type="entry name" value="Collagen_superfamily"/>
</dbReference>
<dbReference type="InterPro" id="IPR010515">
    <property type="entry name" value="Collagenase_NC10/endostatin"/>
</dbReference>
<dbReference type="InterPro" id="IPR013320">
    <property type="entry name" value="ConA-like_dom_sf"/>
</dbReference>
<dbReference type="InterPro" id="IPR016187">
    <property type="entry name" value="CTDL_fold"/>
</dbReference>
<dbReference type="InterPro" id="IPR001791">
    <property type="entry name" value="Laminin_G"/>
</dbReference>
<dbReference type="InterPro" id="IPR048287">
    <property type="entry name" value="TSPN-like_N"/>
</dbReference>
<dbReference type="InterPro" id="IPR045463">
    <property type="entry name" value="XV/XVIII_trimerization_dom"/>
</dbReference>
<dbReference type="PANTHER" id="PTHR24023">
    <property type="entry name" value="COLLAGEN ALPHA"/>
    <property type="match status" value="1"/>
</dbReference>
<dbReference type="PANTHER" id="PTHR24023:SF1082">
    <property type="entry name" value="COLLAGEN TRIPLE HELIX REPEAT"/>
    <property type="match status" value="1"/>
</dbReference>
<dbReference type="Pfam" id="PF01391">
    <property type="entry name" value="Collagen"/>
    <property type="match status" value="4"/>
</dbReference>
<dbReference type="Pfam" id="PF20010">
    <property type="entry name" value="Collagen_trimer"/>
    <property type="match status" value="1"/>
</dbReference>
<dbReference type="Pfam" id="PF06482">
    <property type="entry name" value="Endostatin"/>
    <property type="match status" value="1"/>
</dbReference>
<dbReference type="Pfam" id="PF13385">
    <property type="entry name" value="Laminin_G_3"/>
    <property type="match status" value="1"/>
</dbReference>
<dbReference type="SMART" id="SM00282">
    <property type="entry name" value="LamG"/>
    <property type="match status" value="1"/>
</dbReference>
<dbReference type="SMART" id="SM00210">
    <property type="entry name" value="TSPN"/>
    <property type="match status" value="1"/>
</dbReference>
<dbReference type="SUPFAM" id="SSF56436">
    <property type="entry name" value="C-type lectin-like"/>
    <property type="match status" value="2"/>
</dbReference>
<dbReference type="SUPFAM" id="SSF49899">
    <property type="entry name" value="Concanavalin A-like lectins/glucanases"/>
    <property type="match status" value="1"/>
</dbReference>
<evidence type="ECO:0000250" key="1"/>
<evidence type="ECO:0000250" key="2">
    <source>
        <dbReference type="UniProtKB" id="P39059"/>
    </source>
</evidence>
<evidence type="ECO:0000255" key="3"/>
<evidence type="ECO:0000256" key="4">
    <source>
        <dbReference type="SAM" id="MobiDB-lite"/>
    </source>
</evidence>
<evidence type="ECO:0000269" key="5">
    <source>
    </source>
</evidence>
<evidence type="ECO:0000269" key="6">
    <source>
    </source>
</evidence>
<evidence type="ECO:0000269" key="7">
    <source>
    </source>
</evidence>
<evidence type="ECO:0000305" key="8"/>
<evidence type="ECO:0007829" key="9">
    <source>
        <dbReference type="PDB" id="1DY2"/>
    </source>
</evidence>
<sequence length="1367" mass="140472">MTHRRTAQGRRPRWLLSIISALLSAVLQTRAATGSASQVHLDLTVLIGVPLPSSVSFTTGYGGFPAYSFGPGANVGRPARTLIPPTFFRDFAIGVAVKPNSAQGGVLFAITDAFQKVIYLGLRLSSVEDGRQRVILYYTEPGSHVSREAAVFSVPVMTNRWNRFAVTVQGEEVALFMDCEEQSQVRFQRSSWPLTFEPSAGIFVGNAGAMGLERFTGSIQQLTIYSDPRTPEELCEAQESSASGEASGFQEMDEVAEIMEAVTYTQAPPKESHVDPISVPPTSSSPAEDSELSGEPVPEGTPETNLSIIGHSSPEQGSGEILNDTLEVHAMDGDPGTDDGSGDGALLNVTDGQGLSATATGEASVPVTTVLEAENGSMPTGSPTLAMFTQSIREVDTPDPENLTTTASGDGEVPTSTDGDTEADSSPTGGPTLKPREEATLGSHGEEWLTPAVSKMPLKAFEEEEASGTAIDSLDVIFTPTVVLEQVSRRPTDIQATFTPTVVLEETSGAPTDTQDALTPTVAPEQMFTAEPTDGGDLVASTEEAEEEGSGSMPPSGPPLPTPTVTPKRQVTLVGVEAEGSGPVGGLDEGSGSGDIVGNEDLLRGPPGPPGPPGSPGIPGKPGTDVFMGPPGSPGEDGAPGEPGPQGPEGQPGLDGASGQQGMKGEKGARGPNGSAGEKGDPGNRGLPGPPGKNGEVGTPGVMGPPGPPGPPGPPGPGCTTELGFEIEGSGDVRLLSKPTISGPTSPSGPKGEKGEQGAKGERGADGTSTMGPPGPRGPPGHVEVLSSSLINITNGSMNFSDIPELMGPPGPDGVPGLPGFPGPRGPKGDTGVPGFPGLKGEQGEKGEPGAILTGDVPLEMMKGRKGEPGIHGAPGPMGPKGPPGHKGEFGLPGRPGRPGLNGLKGAKGDRGVTLPGPPGLPGPPGPPGPPGAVVNIKGAVFPIPARPHCKTPVGTAHPGDPELVTFHGVKGEKGSWGLPGSKGEKGDQGAQGPPGPPVDPAYLRHFLNSLKGENEDASFRGESSNNLFVSGPPGLPGYPGLVGQKGEAVVGPQGPPGIPGLPGPPGFGRPGVPGPPGPPGPPGPPAILGAAVALPGPPGPPGQPGLPGSRNLVTALSDMGDMLQKAHLVIEGTFIYLRDSGEFFIRVRDGWKKLQLGELIPIPADSPPPPALSSNPYQPQPPLNPILSANYERPVLHLVALNTPVAGDIRADFQCFQQARAAGLLSTFRAFLSSHLQDLSTVVRKAERFGLPIVNLKGQVLFNNWDSIFSGDGGQFNTHIPIYSFDGRDVMTDPSWPQKVVWHGSNPHGVRLVDKYCEAWRTTDMAVTGFASPLSTGKILDQKAYSCANRLIVLCIENSFMTDTRK</sequence>
<accession>O35206</accession>
<accession>A2AJY3</accession>
<accession>Q3UZ71</accession>
<accession>Q9EQD9</accession>
<name>COFA1_MOUSE</name>
<gene>
    <name type="primary">Col15a1</name>
</gene>
<keyword id="KW-0002">3D-structure</keyword>
<keyword id="KW-0130">Cell adhesion</keyword>
<keyword id="KW-0176">Collagen</keyword>
<keyword id="KW-1015">Disulfide bond</keyword>
<keyword id="KW-0272">Extracellular matrix</keyword>
<keyword id="KW-0325">Glycoprotein</keyword>
<keyword id="KW-0379">Hydroxylation</keyword>
<keyword id="KW-0654">Proteoglycan</keyword>
<keyword id="KW-1185">Reference proteome</keyword>
<keyword id="KW-0677">Repeat</keyword>
<keyword id="KW-0964">Secreted</keyword>
<keyword id="KW-0732">Signal</keyword>
<comment type="function">
    <text>Structural protein that stabilizes microvessels and muscle cells, both in heart and in skeletal muscle.</text>
</comment>
<comment type="function">
    <text>Restin potently inhibits angiogenesis.</text>
</comment>
<comment type="subunit">
    <text evidence="1">Trimer; disulfide-linked.</text>
</comment>
<comment type="subunit">
    <molecule>Restin</molecule>
    <text evidence="5">Interacts moderately with EFEMP2.</text>
</comment>
<comment type="subcellular location">
    <subcellularLocation>
        <location evidence="1">Secreted</location>
        <location evidence="1">Extracellular space</location>
        <location evidence="1">Extracellular matrix</location>
    </subcellularLocation>
    <subcellularLocation>
        <location evidence="2">Secreted</location>
    </subcellularLocation>
</comment>
<comment type="tissue specificity">
    <text evidence="6">Detected in testis, brain, heart, kidney, skeletal muscle and skin (at protein level). Detected in heart and skeletal muscle.</text>
</comment>
<comment type="developmental stage">
    <text>Detected at low levels from day 7 to 11 of embryonic development. Levels are much increased and remain high from day 15 to 17.</text>
</comment>
<comment type="PTM">
    <text evidence="1">Prolines at the third position of the tripeptide repeating unit (G-X-Y) are hydroxylated in some or all of the chains.</text>
</comment>
<comment type="PTM">
    <text evidence="2">O-glycosylated; contains chondroitin sulfate.</text>
</comment>
<comment type="similarity">
    <text evidence="8">Belongs to the multiplexin collagen family.</text>
</comment>
<comment type="caution">
    <text evidence="8">The name Restin has also been used for CAP-Gly domain-containing linker protein 1 the product of the CLIP1 gene.</text>
</comment>
<feature type="signal peptide" evidence="3">
    <location>
        <begin position="1"/>
        <end position="31"/>
    </location>
</feature>
<feature type="chain" id="PRO_0000005790" description="Collagen alpha-1(XV) chain">
    <location>
        <begin position="32"/>
        <end position="1367"/>
    </location>
</feature>
<feature type="chain" id="PRO_0000005791" description="Restin">
    <location>
        <begin position="1177"/>
        <end position="1365"/>
    </location>
</feature>
<feature type="domain" description="Laminin G-like">
    <location>
        <begin position="54"/>
        <end position="249"/>
    </location>
</feature>
<feature type="domain" description="Collagen-like 1">
    <location>
        <begin position="605"/>
        <end position="665"/>
    </location>
</feature>
<feature type="domain" description="Collagen-like 2">
    <location>
        <begin position="666"/>
        <end position="717"/>
    </location>
</feature>
<feature type="domain" description="Collagen-like 3">
    <location>
        <begin position="808"/>
        <end position="850"/>
    </location>
</feature>
<feature type="domain" description="Collagen-like 4">
    <location>
        <begin position="863"/>
        <end position="912"/>
    </location>
</feature>
<feature type="region of interest" description="Nonhelical region 1 (NC1)">
    <location>
        <begin position="229"/>
        <end position="604"/>
    </location>
</feature>
<feature type="region of interest" description="Disordered" evidence="4">
    <location>
        <begin position="267"/>
        <end position="319"/>
    </location>
</feature>
<feature type="region of interest" description="Disordered" evidence="4">
    <location>
        <begin position="396"/>
        <end position="446"/>
    </location>
</feature>
<feature type="region of interest" description="Disordered" evidence="4">
    <location>
        <begin position="529"/>
        <end position="784"/>
    </location>
</feature>
<feature type="region of interest" description="Triple-helical region 1 (COL1)">
    <location>
        <begin position="605"/>
        <end position="718"/>
    </location>
</feature>
<feature type="region of interest" description="Nonhelical region 2 (NC2)">
    <location>
        <begin position="719"/>
        <end position="748"/>
    </location>
</feature>
<feature type="region of interest" description="Triple-helical region 2 (COL2)">
    <location>
        <begin position="749"/>
        <end position="783"/>
    </location>
</feature>
<feature type="region of interest" description="Nonhelical region 3 (NC3)">
    <location>
        <begin position="784"/>
        <end position="807"/>
    </location>
</feature>
<feature type="region of interest" description="Triple-helical region 3 (COL3)">
    <location>
        <begin position="808"/>
        <end position="852"/>
    </location>
</feature>
<feature type="region of interest" description="Nonhelical region 4 (NC4)">
    <location>
        <begin position="853"/>
        <end position="863"/>
    </location>
</feature>
<feature type="region of interest" description="Triple-helical region 4 (COL4)">
    <location>
        <begin position="864"/>
        <end position="934"/>
    </location>
</feature>
<feature type="region of interest" description="Disordered" evidence="4">
    <location>
        <begin position="905"/>
        <end position="930"/>
    </location>
</feature>
<feature type="region of interest" description="Nonhelical region 5 (NC5)">
    <location>
        <begin position="935"/>
        <end position="968"/>
    </location>
</feature>
<feature type="region of interest" description="Triple-helical region 5 (COL5)">
    <location>
        <begin position="969"/>
        <end position="998"/>
    </location>
</feature>
<feature type="region of interest" description="Disordered" evidence="4">
    <location>
        <begin position="974"/>
        <end position="1000"/>
    </location>
</feature>
<feature type="region of interest" description="Nonhelical region 6 (NC6)">
    <location>
        <begin position="999"/>
        <end position="1031"/>
    </location>
</feature>
<feature type="region of interest" description="Triple-helical region 6 (COL6)">
    <location>
        <begin position="1032"/>
        <end position="1086"/>
    </location>
</feature>
<feature type="region of interest" description="Disordered" evidence="4">
    <location>
        <begin position="1055"/>
        <end position="1089"/>
    </location>
</feature>
<feature type="region of interest" description="Nonhelical region 7 (NC7)">
    <location>
        <begin position="1087"/>
        <end position="1096"/>
    </location>
</feature>
<feature type="region of interest" description="Triple-helical region 7 (COL7)">
    <location>
        <begin position="1097"/>
        <end position="1111"/>
    </location>
</feature>
<feature type="region of interest" description="Nonhelical region 8 (NC8)">
    <location>
        <begin position="1112"/>
        <end position="1367"/>
    </location>
</feature>
<feature type="compositionally biased region" description="Polar residues" evidence="4">
    <location>
        <begin position="402"/>
        <end position="429"/>
    </location>
</feature>
<feature type="compositionally biased region" description="Basic and acidic residues" evidence="4">
    <location>
        <begin position="434"/>
        <end position="446"/>
    </location>
</feature>
<feature type="compositionally biased region" description="Pro residues" evidence="4">
    <location>
        <begin position="555"/>
        <end position="564"/>
    </location>
</feature>
<feature type="compositionally biased region" description="Gly residues" evidence="4">
    <location>
        <begin position="582"/>
        <end position="595"/>
    </location>
</feature>
<feature type="compositionally biased region" description="Pro residues" evidence="4">
    <location>
        <begin position="606"/>
        <end position="616"/>
    </location>
</feature>
<feature type="compositionally biased region" description="Pro residues" evidence="4">
    <location>
        <begin position="703"/>
        <end position="717"/>
    </location>
</feature>
<feature type="compositionally biased region" description="Low complexity" evidence="4">
    <location>
        <begin position="737"/>
        <end position="750"/>
    </location>
</feature>
<feature type="compositionally biased region" description="Basic and acidic residues" evidence="4">
    <location>
        <begin position="751"/>
        <end position="765"/>
    </location>
</feature>
<feature type="compositionally biased region" description="Pro residues" evidence="4">
    <location>
        <begin position="916"/>
        <end position="930"/>
    </location>
</feature>
<feature type="compositionally biased region" description="Pro residues" evidence="4">
    <location>
        <begin position="1055"/>
        <end position="1086"/>
    </location>
</feature>
<feature type="glycosylation site" description="O-linked (Xyl...) (chondroitin sulfate) serine" evidence="3">
    <location>
        <position position="243"/>
    </location>
</feature>
<feature type="glycosylation site" description="O-linked (Xyl...) (chondroitin sulfate) serine" evidence="3">
    <location>
        <position position="247"/>
    </location>
</feature>
<feature type="glycosylation site" description="N-linked (GlcNAc...) asparagine" evidence="3">
    <location>
        <position position="305"/>
    </location>
</feature>
<feature type="glycosylation site" description="N-linked (GlcNAc...) asparagine" evidence="3">
    <location>
        <position position="323"/>
    </location>
</feature>
<feature type="glycosylation site" description="O-linked (Xyl...) (chondroitin sulfate) serine" evidence="2">
    <location>
        <position position="341"/>
    </location>
</feature>
<feature type="glycosylation site" description="N-linked (GlcNAc...) asparagine" evidence="3">
    <location>
        <position position="348"/>
    </location>
</feature>
<feature type="glycosylation site" description="N-linked (GlcNAc...) asparagine" evidence="3">
    <location>
        <position position="375"/>
    </location>
</feature>
<feature type="glycosylation site" description="N-linked (GlcNAc...) asparagine" evidence="3">
    <location>
        <position position="402"/>
    </location>
</feature>
<feature type="glycosylation site" description="N-linked (GlcNAc...) asparagine" evidence="3">
    <location>
        <position position="673"/>
    </location>
</feature>
<feature type="glycosylation site" description="O-linked (Xyl...) (chondroitin sulfate) serine" evidence="2">
    <location>
        <position position="730"/>
    </location>
</feature>
<feature type="glycosylation site" description="N-linked (GlcNAc...) asparagine" evidence="3">
    <location>
        <position position="792"/>
    </location>
</feature>
<feature type="glycosylation site" description="N-linked (GlcNAc...) asparagine" evidence="3">
    <location>
        <position position="795"/>
    </location>
</feature>
<feature type="glycosylation site" description="N-linked (GlcNAc...) asparagine" evidence="3">
    <location>
        <position position="799"/>
    </location>
</feature>
<feature type="disulfide bond" evidence="7">
    <location>
        <begin position="1216"/>
        <end position="1356"/>
    </location>
</feature>
<feature type="disulfide bond" evidence="7">
    <location>
        <begin position="1318"/>
        <end position="1348"/>
    </location>
</feature>
<feature type="sequence conflict" description="In Ref. 1; AAC53387." evidence="8" ref="1">
    <original>T</original>
    <variation>L</variation>
    <location>
        <position position="380"/>
    </location>
</feature>
<feature type="sequence conflict" description="In Ref. 3; BAE21987." evidence="8" ref="3">
    <original>T</original>
    <variation>K</variation>
    <location>
        <position position="499"/>
    </location>
</feature>
<feature type="sequence conflict" description="In Ref. 2; AAG27545." evidence="8" ref="2">
    <original>R</original>
    <variation>K</variation>
    <location>
        <position position="569"/>
    </location>
</feature>
<feature type="sequence conflict" description="In Ref. 2; AAG27545." evidence="8" ref="2">
    <original>S</original>
    <variation>A</variation>
    <location>
        <position position="593"/>
    </location>
</feature>
<feature type="sequence conflict" description="In Ref. 1; AAC53387 and 2; AAG27545." evidence="8" ref="1 2">
    <original>T</original>
    <variation>P</variation>
    <location>
        <position position="699"/>
    </location>
</feature>
<feature type="sequence conflict" description="In Ref. 2; AAG27545." evidence="8" ref="2">
    <original>L</original>
    <variation>M</variation>
    <location>
        <position position="736"/>
    </location>
</feature>
<feature type="sequence conflict" description="In Ref. 1; AAC53387." evidence="8" ref="1">
    <original>P</original>
    <variation>R</variation>
    <location>
        <position position="779"/>
    </location>
</feature>
<feature type="sequence conflict" description="In Ref. 1; AAC53387 and 2; AAG27545." evidence="8" ref="1 2">
    <original>A</original>
    <variation>G</variation>
    <location>
        <position position="1116"/>
    </location>
</feature>
<feature type="sequence conflict" description="In Ref. 2; AAG27545." evidence="8" ref="2">
    <original>H</original>
    <variation>Y</variation>
    <location>
        <position position="1309"/>
    </location>
</feature>
<feature type="strand" evidence="9">
    <location>
        <begin position="1197"/>
        <end position="1201"/>
    </location>
</feature>
<feature type="helix" evidence="9">
    <location>
        <begin position="1212"/>
        <end position="1222"/>
    </location>
</feature>
<feature type="strand" evidence="9">
    <location>
        <begin position="1229"/>
        <end position="1233"/>
    </location>
</feature>
<feature type="helix" evidence="9">
    <location>
        <begin position="1240"/>
        <end position="1242"/>
    </location>
</feature>
<feature type="helix" evidence="9">
    <location>
        <begin position="1246"/>
        <end position="1248"/>
    </location>
</feature>
<feature type="strand" evidence="9">
    <location>
        <begin position="1249"/>
        <end position="1251"/>
    </location>
</feature>
<feature type="strand" evidence="9">
    <location>
        <begin position="1261"/>
        <end position="1264"/>
    </location>
</feature>
<feature type="helix" evidence="9">
    <location>
        <begin position="1267"/>
        <end position="1270"/>
    </location>
</feature>
<feature type="strand" evidence="9">
    <location>
        <begin position="1271"/>
        <end position="1273"/>
    </location>
</feature>
<feature type="turn" evidence="9">
    <location>
        <begin position="1291"/>
        <end position="1293"/>
    </location>
</feature>
<feature type="strand" evidence="9">
    <location>
        <begin position="1301"/>
        <end position="1303"/>
    </location>
</feature>
<feature type="helix" evidence="9">
    <location>
        <begin position="1318"/>
        <end position="1321"/>
    </location>
</feature>
<feature type="strand" evidence="9">
    <location>
        <begin position="1329"/>
        <end position="1334"/>
    </location>
</feature>
<feature type="helix" evidence="9">
    <location>
        <begin position="1335"/>
        <end position="1337"/>
    </location>
</feature>
<feature type="strand" evidence="9">
    <location>
        <begin position="1339"/>
        <end position="1341"/>
    </location>
</feature>
<feature type="strand" evidence="9">
    <location>
        <begin position="1344"/>
        <end position="1347"/>
    </location>
</feature>
<feature type="strand" evidence="9">
    <location>
        <begin position="1355"/>
        <end position="1358"/>
    </location>
</feature>
<organism>
    <name type="scientific">Mus musculus</name>
    <name type="common">Mouse</name>
    <dbReference type="NCBI Taxonomy" id="10090"/>
    <lineage>
        <taxon>Eukaryota</taxon>
        <taxon>Metazoa</taxon>
        <taxon>Chordata</taxon>
        <taxon>Craniata</taxon>
        <taxon>Vertebrata</taxon>
        <taxon>Euteleostomi</taxon>
        <taxon>Mammalia</taxon>
        <taxon>Eutheria</taxon>
        <taxon>Euarchontoglires</taxon>
        <taxon>Glires</taxon>
        <taxon>Rodentia</taxon>
        <taxon>Myomorpha</taxon>
        <taxon>Muroidea</taxon>
        <taxon>Muridae</taxon>
        <taxon>Murinae</taxon>
        <taxon>Mus</taxon>
        <taxon>Mus</taxon>
    </lineage>
</organism>
<proteinExistence type="evidence at protein level"/>
<reference key="1">
    <citation type="journal article" date="1997" name="Genomics">
        <title>Cloning of mouse type XV collagen sequences and mapping of the corresponding gene to 4B1-3. Comparison of mouse and human alpha 1 (XV) collagen sequences indicates divergence in the number of small collagenous domains.</title>
        <authorList>
            <person name="Haegg P.M."/>
            <person name="Horelli-Kuitunen N."/>
            <person name="Eklund L."/>
            <person name="Palotie A."/>
            <person name="Pihlajaniemi T."/>
        </authorList>
    </citation>
    <scope>NUCLEOTIDE SEQUENCE [MRNA]</scope>
    <scope>TISSUE SPECIFICITY</scope>
    <source>
        <strain>129/Sv</strain>
        <tissue>Kidney</tissue>
    </source>
</reference>
<reference key="2">
    <citation type="journal article" date="2000" name="Matrix Biol.">
        <title>Structure of the mouse type XV collagen gene, Col15a1, comparison with the human COL15A1 gene and functional analysis of the promoters of both genes.</title>
        <authorList>
            <person name="Eklund L."/>
            <person name="Muona A."/>
            <person name="Lietard J."/>
            <person name="Pihlajaniemi T."/>
        </authorList>
    </citation>
    <scope>NUCLEOTIDE SEQUENCE [GENOMIC DNA]</scope>
    <source>
        <strain>129/Sv</strain>
    </source>
</reference>
<reference key="3">
    <citation type="journal article" date="2005" name="Science">
        <title>The transcriptional landscape of the mammalian genome.</title>
        <authorList>
            <person name="Carninci P."/>
            <person name="Kasukawa T."/>
            <person name="Katayama S."/>
            <person name="Gough J."/>
            <person name="Frith M.C."/>
            <person name="Maeda N."/>
            <person name="Oyama R."/>
            <person name="Ravasi T."/>
            <person name="Lenhard B."/>
            <person name="Wells C."/>
            <person name="Kodzius R."/>
            <person name="Shimokawa K."/>
            <person name="Bajic V.B."/>
            <person name="Brenner S.E."/>
            <person name="Batalov S."/>
            <person name="Forrest A.R."/>
            <person name="Zavolan M."/>
            <person name="Davis M.J."/>
            <person name="Wilming L.G."/>
            <person name="Aidinis V."/>
            <person name="Allen J.E."/>
            <person name="Ambesi-Impiombato A."/>
            <person name="Apweiler R."/>
            <person name="Aturaliya R.N."/>
            <person name="Bailey T.L."/>
            <person name="Bansal M."/>
            <person name="Baxter L."/>
            <person name="Beisel K.W."/>
            <person name="Bersano T."/>
            <person name="Bono H."/>
            <person name="Chalk A.M."/>
            <person name="Chiu K.P."/>
            <person name="Choudhary V."/>
            <person name="Christoffels A."/>
            <person name="Clutterbuck D.R."/>
            <person name="Crowe M.L."/>
            <person name="Dalla E."/>
            <person name="Dalrymple B.P."/>
            <person name="de Bono B."/>
            <person name="Della Gatta G."/>
            <person name="di Bernardo D."/>
            <person name="Down T."/>
            <person name="Engstrom P."/>
            <person name="Fagiolini M."/>
            <person name="Faulkner G."/>
            <person name="Fletcher C.F."/>
            <person name="Fukushima T."/>
            <person name="Furuno M."/>
            <person name="Futaki S."/>
            <person name="Gariboldi M."/>
            <person name="Georgii-Hemming P."/>
            <person name="Gingeras T.R."/>
            <person name="Gojobori T."/>
            <person name="Green R.E."/>
            <person name="Gustincich S."/>
            <person name="Harbers M."/>
            <person name="Hayashi Y."/>
            <person name="Hensch T.K."/>
            <person name="Hirokawa N."/>
            <person name="Hill D."/>
            <person name="Huminiecki L."/>
            <person name="Iacono M."/>
            <person name="Ikeo K."/>
            <person name="Iwama A."/>
            <person name="Ishikawa T."/>
            <person name="Jakt M."/>
            <person name="Kanapin A."/>
            <person name="Katoh M."/>
            <person name="Kawasawa Y."/>
            <person name="Kelso J."/>
            <person name="Kitamura H."/>
            <person name="Kitano H."/>
            <person name="Kollias G."/>
            <person name="Krishnan S.P."/>
            <person name="Kruger A."/>
            <person name="Kummerfeld S.K."/>
            <person name="Kurochkin I.V."/>
            <person name="Lareau L.F."/>
            <person name="Lazarevic D."/>
            <person name="Lipovich L."/>
            <person name="Liu J."/>
            <person name="Liuni S."/>
            <person name="McWilliam S."/>
            <person name="Madan Babu M."/>
            <person name="Madera M."/>
            <person name="Marchionni L."/>
            <person name="Matsuda H."/>
            <person name="Matsuzawa S."/>
            <person name="Miki H."/>
            <person name="Mignone F."/>
            <person name="Miyake S."/>
            <person name="Morris K."/>
            <person name="Mottagui-Tabar S."/>
            <person name="Mulder N."/>
            <person name="Nakano N."/>
            <person name="Nakauchi H."/>
            <person name="Ng P."/>
            <person name="Nilsson R."/>
            <person name="Nishiguchi S."/>
            <person name="Nishikawa S."/>
            <person name="Nori F."/>
            <person name="Ohara O."/>
            <person name="Okazaki Y."/>
            <person name="Orlando V."/>
            <person name="Pang K.C."/>
            <person name="Pavan W.J."/>
            <person name="Pavesi G."/>
            <person name="Pesole G."/>
            <person name="Petrovsky N."/>
            <person name="Piazza S."/>
            <person name="Reed J."/>
            <person name="Reid J.F."/>
            <person name="Ring B.Z."/>
            <person name="Ringwald M."/>
            <person name="Rost B."/>
            <person name="Ruan Y."/>
            <person name="Salzberg S.L."/>
            <person name="Sandelin A."/>
            <person name="Schneider C."/>
            <person name="Schoenbach C."/>
            <person name="Sekiguchi K."/>
            <person name="Semple C.A."/>
            <person name="Seno S."/>
            <person name="Sessa L."/>
            <person name="Sheng Y."/>
            <person name="Shibata Y."/>
            <person name="Shimada H."/>
            <person name="Shimada K."/>
            <person name="Silva D."/>
            <person name="Sinclair B."/>
            <person name="Sperling S."/>
            <person name="Stupka E."/>
            <person name="Sugiura K."/>
            <person name="Sultana R."/>
            <person name="Takenaka Y."/>
            <person name="Taki K."/>
            <person name="Tammoja K."/>
            <person name="Tan S.L."/>
            <person name="Tang S."/>
            <person name="Taylor M.S."/>
            <person name="Tegner J."/>
            <person name="Teichmann S.A."/>
            <person name="Ueda H.R."/>
            <person name="van Nimwegen E."/>
            <person name="Verardo R."/>
            <person name="Wei C.L."/>
            <person name="Yagi K."/>
            <person name="Yamanishi H."/>
            <person name="Zabarovsky E."/>
            <person name="Zhu S."/>
            <person name="Zimmer A."/>
            <person name="Hide W."/>
            <person name="Bult C."/>
            <person name="Grimmond S.M."/>
            <person name="Teasdale R.D."/>
            <person name="Liu E.T."/>
            <person name="Brusic V."/>
            <person name="Quackenbush J."/>
            <person name="Wahlestedt C."/>
            <person name="Mattick J.S."/>
            <person name="Hume D.A."/>
            <person name="Kai C."/>
            <person name="Sasaki D."/>
            <person name="Tomaru Y."/>
            <person name="Fukuda S."/>
            <person name="Kanamori-Katayama M."/>
            <person name="Suzuki M."/>
            <person name="Aoki J."/>
            <person name="Arakawa T."/>
            <person name="Iida J."/>
            <person name="Imamura K."/>
            <person name="Itoh M."/>
            <person name="Kato T."/>
            <person name="Kawaji H."/>
            <person name="Kawagashira N."/>
            <person name="Kawashima T."/>
            <person name="Kojima M."/>
            <person name="Kondo S."/>
            <person name="Konno H."/>
            <person name="Nakano K."/>
            <person name="Ninomiya N."/>
            <person name="Nishio T."/>
            <person name="Okada M."/>
            <person name="Plessy C."/>
            <person name="Shibata K."/>
            <person name="Shiraki T."/>
            <person name="Suzuki S."/>
            <person name="Tagami M."/>
            <person name="Waki K."/>
            <person name="Watahiki A."/>
            <person name="Okamura-Oho Y."/>
            <person name="Suzuki H."/>
            <person name="Kawai J."/>
            <person name="Hayashizaki Y."/>
        </authorList>
    </citation>
    <scope>NUCLEOTIDE SEQUENCE [LARGE SCALE MRNA]</scope>
    <source>
        <strain>C57BL/6J</strain>
        <tissue>Thymus</tissue>
    </source>
</reference>
<reference key="4">
    <citation type="journal article" date="2009" name="PLoS Biol.">
        <title>Lineage-specific biology revealed by a finished genome assembly of the mouse.</title>
        <authorList>
            <person name="Church D.M."/>
            <person name="Goodstadt L."/>
            <person name="Hillier L.W."/>
            <person name="Zody M.C."/>
            <person name="Goldstein S."/>
            <person name="She X."/>
            <person name="Bult C.J."/>
            <person name="Agarwala R."/>
            <person name="Cherry J.L."/>
            <person name="DiCuccio M."/>
            <person name="Hlavina W."/>
            <person name="Kapustin Y."/>
            <person name="Meric P."/>
            <person name="Maglott D."/>
            <person name="Birtle Z."/>
            <person name="Marques A.C."/>
            <person name="Graves T."/>
            <person name="Zhou S."/>
            <person name="Teague B."/>
            <person name="Potamousis K."/>
            <person name="Churas C."/>
            <person name="Place M."/>
            <person name="Herschleb J."/>
            <person name="Runnheim R."/>
            <person name="Forrest D."/>
            <person name="Amos-Landgraf J."/>
            <person name="Schwartz D.C."/>
            <person name="Cheng Z."/>
            <person name="Lindblad-Toh K."/>
            <person name="Eichler E.E."/>
            <person name="Ponting C.P."/>
        </authorList>
    </citation>
    <scope>NUCLEOTIDE SEQUENCE [LARGE SCALE GENOMIC DNA]</scope>
    <source>
        <strain>C57BL/6J</strain>
    </source>
</reference>
<reference key="5">
    <citation type="journal article" date="2000" name="J. Mol. Biol.">
        <title>Endostatins derived from collagens XV and XVIII differ in structural and binding properties, tissue distribution and anti-angiogenic activity.</title>
        <authorList>
            <person name="Sasaki T."/>
            <person name="Larsson H."/>
            <person name="Tisi D."/>
            <person name="Claesson-Welsh L."/>
            <person name="Hohenester E."/>
            <person name="Timpl R."/>
        </authorList>
    </citation>
    <scope>FUNCTION</scope>
</reference>
<reference key="6">
    <citation type="journal article" date="2001" name="Proc. Natl. Acad. Sci. U.S.A.">
        <title>Lack of type XV collagen causes a skeletal myopathy and cardiovascular defects in mice.</title>
        <authorList>
            <person name="Eklund L."/>
            <person name="Piuhola J."/>
            <person name="Komulainen J."/>
            <person name="Sormunen R."/>
            <person name="Ongvarrasopone C."/>
            <person name="Faessler R."/>
            <person name="Muona A."/>
            <person name="Ilves M."/>
            <person name="Ruskoaho H."/>
            <person name="Takala T.E.S."/>
            <person name="Pihlajaniemi T."/>
        </authorList>
    </citation>
    <scope>FUNCTION</scope>
</reference>
<reference key="7">
    <citation type="journal article" date="2007" name="J. Biol. Chem.">
        <title>A comparative analysis of the fibulin protein family. Biochemical characterization, binding interactions, and tissue localization.</title>
        <authorList>
            <person name="Kobayashi N."/>
            <person name="Kostka G."/>
            <person name="Garbe J.H."/>
            <person name="Keene D.R."/>
            <person name="Baechinger H.P."/>
            <person name="Hanisch F.G."/>
            <person name="Markova D."/>
            <person name="Tsuda T."/>
            <person name="Timpl R."/>
            <person name="Chu M.L."/>
            <person name="Sasaki T."/>
        </authorList>
    </citation>
    <scope>INTERACTION WITH EFEMP2</scope>
</reference>
<reference key="8">
    <citation type="journal article" date="2010" name="Cell">
        <title>A tissue-specific atlas of mouse protein phosphorylation and expression.</title>
        <authorList>
            <person name="Huttlin E.L."/>
            <person name="Jedrychowski M.P."/>
            <person name="Elias J.E."/>
            <person name="Goswami T."/>
            <person name="Rad R."/>
            <person name="Beausoleil S.A."/>
            <person name="Villen J."/>
            <person name="Haas W."/>
            <person name="Sowa M.E."/>
            <person name="Gygi S.P."/>
        </authorList>
    </citation>
    <scope>IDENTIFICATION BY MASS SPECTROMETRY [LARGE SCALE ANALYSIS]</scope>
    <source>
        <tissue>Brown adipose tissue</tissue>
        <tissue>Heart</tissue>
        <tissue>Kidney</tissue>
    </source>
</reference>
<reference key="9">
    <citation type="journal article" date="1998" name="EMBO J.">
        <title>Crystal structure of the angiogenesis inhibitor endostatin at 1.5-A resolution.</title>
        <authorList>
            <person name="Hohenester E."/>
            <person name="Sasaki T."/>
            <person name="Olsen B.R."/>
            <person name="Timpl R."/>
        </authorList>
    </citation>
    <scope>X-RAY CRYSTALLOGRAPHY (2.0 ANGSTROMS) OF 1192-1367</scope>
    <scope>DISULFIDE BONDS</scope>
</reference>
<protein>
    <recommendedName>
        <fullName>Collagen alpha-1(XV) chain</fullName>
    </recommendedName>
    <component>
        <recommendedName>
            <fullName>Restin</fullName>
        </recommendedName>
        <alternativeName>
            <fullName>Endostatin-XV</fullName>
        </alternativeName>
    </component>
</protein>